<organism>
    <name type="scientific">Zoarces americanus</name>
    <name type="common">Ocean pout</name>
    <name type="synonym">Macrozoarces americanus</name>
    <dbReference type="NCBI Taxonomy" id="8199"/>
    <lineage>
        <taxon>Eukaryota</taxon>
        <taxon>Metazoa</taxon>
        <taxon>Chordata</taxon>
        <taxon>Craniata</taxon>
        <taxon>Vertebrata</taxon>
        <taxon>Euteleostomi</taxon>
        <taxon>Actinopterygii</taxon>
        <taxon>Neopterygii</taxon>
        <taxon>Teleostei</taxon>
        <taxon>Neoteleostei</taxon>
        <taxon>Acanthomorphata</taxon>
        <taxon>Eupercaria</taxon>
        <taxon>Perciformes</taxon>
        <taxon>Cottioidei</taxon>
        <taxon>Zoarcales</taxon>
        <taxon>Zoarcidae</taxon>
        <taxon>Zoarcinae</taxon>
        <taxon>Zoarces</taxon>
    </lineage>
</organism>
<sequence>QSVVATQLIPINTALTPAMMEGKVTNPIGIPFAEMSQIVGKQVNTPVAKGQTIMPNMVKTYAA</sequence>
<dbReference type="PIR" id="E31075">
    <property type="entry name" value="E31075"/>
</dbReference>
<dbReference type="SMR" id="P19609"/>
<dbReference type="GO" id="GO:0005576">
    <property type="term" value="C:extracellular region"/>
    <property type="evidence" value="ECO:0007669"/>
    <property type="project" value="UniProtKB-SubCell"/>
</dbReference>
<dbReference type="Gene3D" id="3.90.1210.10">
    <property type="entry name" value="Antifreeze-like/N-acetylneuraminic acid synthase C-terminal domain"/>
    <property type="match status" value="1"/>
</dbReference>
<dbReference type="InterPro" id="IPR006190">
    <property type="entry name" value="AFP_Neu5c_C"/>
</dbReference>
<dbReference type="InterPro" id="IPR036732">
    <property type="entry name" value="AFP_Neu5c_C_sf"/>
</dbReference>
<dbReference type="InterPro" id="IPR006013">
    <property type="entry name" value="Antifreeze_III"/>
</dbReference>
<dbReference type="InterPro" id="IPR013974">
    <property type="entry name" value="SAF"/>
</dbReference>
<dbReference type="Pfam" id="PF08666">
    <property type="entry name" value="SAF"/>
    <property type="match status" value="1"/>
</dbReference>
<dbReference type="PRINTS" id="PR00357">
    <property type="entry name" value="ANTIFREEZIII"/>
</dbReference>
<dbReference type="SMART" id="SM00858">
    <property type="entry name" value="SAF"/>
    <property type="match status" value="1"/>
</dbReference>
<dbReference type="SUPFAM" id="SSF51269">
    <property type="entry name" value="AFP III-like domain"/>
    <property type="match status" value="1"/>
</dbReference>
<dbReference type="PROSITE" id="PS50844">
    <property type="entry name" value="AFP_LIKE"/>
    <property type="match status" value="1"/>
</dbReference>
<protein>
    <recommendedName>
        <fullName>Ice-structuring protein SP1(HPLC 4)</fullName>
        <shortName>ISP SP1(HPLC 4)</shortName>
    </recommendedName>
    <alternativeName>
        <fullName>Antifreeze protein SP1(HPLC 4)</fullName>
    </alternativeName>
</protein>
<comment type="function">
    <text evidence="1">Contributes to protect fish blood from freezing at subzero sea water temperatures. Lowers the blood freezing point. Binds to nascent ice crystals and prevents further growth (By similarity).</text>
</comment>
<comment type="subcellular location">
    <subcellularLocation>
        <location evidence="3">Secreted</location>
    </subcellularLocation>
</comment>
<comment type="tissue specificity">
    <text evidence="3">Detected in blood serum (at protein level).</text>
</comment>
<comment type="similarity">
    <text evidence="4">Belongs to the type-III AFP family.</text>
</comment>
<reference key="1">
    <citation type="journal article" date="1988" name="J. Biol. Chem.">
        <title>Multiple genes provide the basis for antifreeze protein diversity and dosage in the ocean pout, Macrozoarces americanus.</title>
        <authorList>
            <person name="Hew C.-L."/>
            <person name="Wang N.-C."/>
            <person name="Joshi S."/>
            <person name="Fletcher G.L."/>
            <person name="Scott G.K."/>
            <person name="Hayes P.H."/>
            <person name="Buettner B."/>
            <person name="Davies P.L."/>
        </authorList>
    </citation>
    <scope>PROTEIN SEQUENCE</scope>
    <scope>SUBCELLULAR LOCATION</scope>
    <scope>TISSUE SPECIFICITY</scope>
</reference>
<keyword id="KW-0047">Antifreeze protein</keyword>
<keyword id="KW-0903">Direct protein sequencing</keyword>
<keyword id="KW-0964">Secreted</keyword>
<evidence type="ECO:0000250" key="1"/>
<evidence type="ECO:0000255" key="2">
    <source>
        <dbReference type="PROSITE-ProRule" id="PRU00021"/>
    </source>
</evidence>
<evidence type="ECO:0000269" key="3">
    <source>
    </source>
</evidence>
<evidence type="ECO:0000305" key="4"/>
<accession>P19609</accession>
<proteinExistence type="evidence at protein level"/>
<feature type="chain" id="PRO_0000155157" description="Ice-structuring protein SP1(HPLC 4)">
    <location>
        <begin position="1"/>
        <end position="63"/>
    </location>
</feature>
<feature type="domain" description="AFP-like" evidence="2">
    <location>
        <begin position="2"/>
        <end position="61"/>
    </location>
</feature>
<feature type="site" description="Important for ice-binding" evidence="1">
    <location>
        <position position="7"/>
    </location>
</feature>
<feature type="site" description="Important for ice-binding" evidence="1">
    <location>
        <position position="12"/>
    </location>
</feature>
<feature type="site" description="Important for ice-binding" evidence="1">
    <location>
        <position position="16"/>
    </location>
</feature>
<feature type="site" description="Important for ice-binding" evidence="1">
    <location>
        <position position="42"/>
    </location>
</feature>
<name>ANP4_ZOAAM</name>